<feature type="chain" id="PRO_0000351536" description="3-hydroxy-5-phosphonooxypentane-2,4-dione thiolase">
    <location>
        <begin position="1"/>
        <end position="291"/>
    </location>
</feature>
<feature type="active site" description="Schiff-base intermediate with substrate" evidence="1">
    <location>
        <position position="203"/>
    </location>
</feature>
<evidence type="ECO:0000255" key="1">
    <source>
        <dbReference type="HAMAP-Rule" id="MF_02052"/>
    </source>
</evidence>
<name>LSRF_YERPG</name>
<proteinExistence type="inferred from homology"/>
<protein>
    <recommendedName>
        <fullName evidence="1">3-hydroxy-5-phosphonooxypentane-2,4-dione thiolase</fullName>
        <ecNumber evidence="1">2.3.1.245</ecNumber>
    </recommendedName>
</protein>
<gene>
    <name evidence="1" type="primary">lsrF</name>
    <name type="ordered locus">YpAngola_A0862</name>
</gene>
<dbReference type="EC" id="2.3.1.245" evidence="1"/>
<dbReference type="EMBL" id="CP000901">
    <property type="protein sequence ID" value="ABX85078.1"/>
    <property type="molecule type" value="Genomic_DNA"/>
</dbReference>
<dbReference type="RefSeq" id="WP_002209188.1">
    <property type="nucleotide sequence ID" value="NZ_CP009935.1"/>
</dbReference>
<dbReference type="SMR" id="A9R0S6"/>
<dbReference type="GeneID" id="57974202"/>
<dbReference type="KEGG" id="ypg:YpAngola_A0862"/>
<dbReference type="PATRIC" id="fig|349746.12.peg.1813"/>
<dbReference type="GO" id="GO:0005737">
    <property type="term" value="C:cytoplasm"/>
    <property type="evidence" value="ECO:0007669"/>
    <property type="project" value="UniProtKB-SubCell"/>
</dbReference>
<dbReference type="GO" id="GO:0016747">
    <property type="term" value="F:acyltransferase activity, transferring groups other than amino-acyl groups"/>
    <property type="evidence" value="ECO:0007669"/>
    <property type="project" value="UniProtKB-UniRule"/>
</dbReference>
<dbReference type="GO" id="GO:0004332">
    <property type="term" value="F:fructose-bisphosphate aldolase activity"/>
    <property type="evidence" value="ECO:0007669"/>
    <property type="project" value="InterPro"/>
</dbReference>
<dbReference type="CDD" id="cd00958">
    <property type="entry name" value="DhnA"/>
    <property type="match status" value="1"/>
</dbReference>
<dbReference type="Gene3D" id="3.20.20.70">
    <property type="entry name" value="Aldolase class I"/>
    <property type="match status" value="1"/>
</dbReference>
<dbReference type="HAMAP" id="MF_02052">
    <property type="entry name" value="LsrF"/>
    <property type="match status" value="1"/>
</dbReference>
<dbReference type="InterPro" id="IPR013785">
    <property type="entry name" value="Aldolase_TIM"/>
</dbReference>
<dbReference type="InterPro" id="IPR002915">
    <property type="entry name" value="DeoC/FbaB/LacD_aldolase"/>
</dbReference>
<dbReference type="InterPro" id="IPR050456">
    <property type="entry name" value="DeoC/FbaB_aldolase"/>
</dbReference>
<dbReference type="InterPro" id="IPR041720">
    <property type="entry name" value="FbaB-like"/>
</dbReference>
<dbReference type="InterPro" id="IPR033673">
    <property type="entry name" value="LsrF"/>
</dbReference>
<dbReference type="NCBIfam" id="NF006081">
    <property type="entry name" value="PRK08227.1"/>
    <property type="match status" value="1"/>
</dbReference>
<dbReference type="PANTHER" id="PTHR47916:SF1">
    <property type="entry name" value="3-HYDROXY-5-PHOSPHONOOXYPENTANE-2,4-DIONE THIOLASE"/>
    <property type="match status" value="1"/>
</dbReference>
<dbReference type="PANTHER" id="PTHR47916">
    <property type="entry name" value="FRUCTOSE-BISPHOSPHATE ALDOLASE CLASS 1"/>
    <property type="match status" value="1"/>
</dbReference>
<dbReference type="Pfam" id="PF01791">
    <property type="entry name" value="DeoC"/>
    <property type="match status" value="1"/>
</dbReference>
<dbReference type="PIRSF" id="PIRSF038992">
    <property type="entry name" value="Aldolase_Ia"/>
    <property type="match status" value="1"/>
</dbReference>
<dbReference type="SMART" id="SM01133">
    <property type="entry name" value="DeoC"/>
    <property type="match status" value="1"/>
</dbReference>
<dbReference type="SUPFAM" id="SSF51569">
    <property type="entry name" value="Aldolase"/>
    <property type="match status" value="1"/>
</dbReference>
<keyword id="KW-0963">Cytoplasm</keyword>
<keyword id="KW-0704">Schiff base</keyword>
<keyword id="KW-0808">Transferase</keyword>
<comment type="function">
    <text evidence="1">Involved in the degradation of phospho-AI-2, thereby terminating induction of the lsr operon and closing the AI-2 signaling cycle. Catalyzes the transfer of an acetyl moiety from 3-hydroxy-5-phosphonooxypentane-2,4-dione to CoA to form glycerone phosphate and acetyl-CoA.</text>
</comment>
<comment type="catalytic activity">
    <reaction evidence="1">
        <text>dihydroxyacetone phosphate + acetyl-CoA = 3-hydroxy-2,4-dioxopentyl phosphate + CoA</text>
        <dbReference type="Rhea" id="RHEA:44736"/>
        <dbReference type="ChEBI" id="CHEBI:57287"/>
        <dbReference type="ChEBI" id="CHEBI:57288"/>
        <dbReference type="ChEBI" id="CHEBI:57642"/>
        <dbReference type="ChEBI" id="CHEBI:84359"/>
        <dbReference type="EC" id="2.3.1.245"/>
    </reaction>
</comment>
<comment type="subunit">
    <text evidence="1">Homodecamer.</text>
</comment>
<comment type="subcellular location">
    <subcellularLocation>
        <location evidence="1">Cytoplasm</location>
    </subcellularLocation>
</comment>
<comment type="similarity">
    <text evidence="1">Belongs to the DeoC/FbaB aldolase family.</text>
</comment>
<organism>
    <name type="scientific">Yersinia pestis bv. Antiqua (strain Angola)</name>
    <dbReference type="NCBI Taxonomy" id="349746"/>
    <lineage>
        <taxon>Bacteria</taxon>
        <taxon>Pseudomonadati</taxon>
        <taxon>Pseudomonadota</taxon>
        <taxon>Gammaproteobacteria</taxon>
        <taxon>Enterobacterales</taxon>
        <taxon>Yersiniaceae</taxon>
        <taxon>Yersinia</taxon>
    </lineage>
</organism>
<reference key="1">
    <citation type="journal article" date="2010" name="J. Bacteriol.">
        <title>Genome sequence of the deep-rooted Yersinia pestis strain Angola reveals new insights into the evolution and pangenome of the plague bacterium.</title>
        <authorList>
            <person name="Eppinger M."/>
            <person name="Worsham P.L."/>
            <person name="Nikolich M.P."/>
            <person name="Riley D.R."/>
            <person name="Sebastian Y."/>
            <person name="Mou S."/>
            <person name="Achtman M."/>
            <person name="Lindler L.E."/>
            <person name="Ravel J."/>
        </authorList>
    </citation>
    <scope>NUCLEOTIDE SEQUENCE [LARGE SCALE GENOMIC DNA]</scope>
    <source>
        <strain>Angola</strain>
    </source>
</reference>
<sequence length="291" mass="31611">MADLDDIKDGKDFGIGIPQQNPAFTLKGSGSLDWGMQSRLARIFNPKTNRTVMLAFDHGYFQGPTTGLERIDINIAPLFEYADVLMCTRGILRSVVPAAANRPVVLRASGANSILTYLSNEAVAVAMEDAVRLNACAVAAQVYIGTEHEHQSIKNIIQLIDQGMRYGMPTMAVTGVGKDMVRDQRYFSLASRIAAEMGAQVIKTYYVDSGFERIAAGCPVPIVIAGGKKLPERDALEMCYQAIDQGASGVDMGRNIFQSDAPIAMLKAVHAIVHKNENAAAAYQLFLHEQN</sequence>
<accession>A9R0S6</accession>